<proteinExistence type="inferred from homology"/>
<accession>A1D1Z9</accession>
<keyword id="KW-0119">Carbohydrate metabolism</keyword>
<keyword id="KW-1015">Disulfide bond</keyword>
<keyword id="KW-0325">Glycoprotein</keyword>
<keyword id="KW-0326">Glycosidase</keyword>
<keyword id="KW-0378">Hydrolase</keyword>
<keyword id="KW-0624">Polysaccharide degradation</keyword>
<keyword id="KW-1185">Reference proteome</keyword>
<keyword id="KW-0964">Secreted</keyword>
<keyword id="KW-0732">Signal</keyword>
<reference key="1">
    <citation type="journal article" date="2008" name="PLoS Genet.">
        <title>Genomic islands in the pathogenic filamentous fungus Aspergillus fumigatus.</title>
        <authorList>
            <person name="Fedorova N.D."/>
            <person name="Khaldi N."/>
            <person name="Joardar V.S."/>
            <person name="Maiti R."/>
            <person name="Amedeo P."/>
            <person name="Anderson M.J."/>
            <person name="Crabtree J."/>
            <person name="Silva J.C."/>
            <person name="Badger J.H."/>
            <person name="Albarraq A."/>
            <person name="Angiuoli S."/>
            <person name="Bussey H."/>
            <person name="Bowyer P."/>
            <person name="Cotty P.J."/>
            <person name="Dyer P.S."/>
            <person name="Egan A."/>
            <person name="Galens K."/>
            <person name="Fraser-Liggett C.M."/>
            <person name="Haas B.J."/>
            <person name="Inman J.M."/>
            <person name="Kent R."/>
            <person name="Lemieux S."/>
            <person name="Malavazi I."/>
            <person name="Orvis J."/>
            <person name="Roemer T."/>
            <person name="Ronning C.M."/>
            <person name="Sundaram J.P."/>
            <person name="Sutton G."/>
            <person name="Turner G."/>
            <person name="Venter J.C."/>
            <person name="White O.R."/>
            <person name="Whitty B.R."/>
            <person name="Youngman P."/>
            <person name="Wolfe K.H."/>
            <person name="Goldman G.H."/>
            <person name="Wortman J.R."/>
            <person name="Jiang B."/>
            <person name="Denning D.W."/>
            <person name="Nierman W.C."/>
        </authorList>
    </citation>
    <scope>NUCLEOTIDE SEQUENCE [LARGE SCALE GENOMIC DNA]</scope>
    <source>
        <strain>ATCC 1020 / DSM 3700 / CBS 544.65 / FGSC A1164 / JCM 1740 / NRRL 181 / WB 181</strain>
    </source>
</reference>
<gene>
    <name type="primary">lacA</name>
    <name type="ORF">NFIA_011250</name>
</gene>
<sequence>MKLLSVCAVALLAAQAAGASIKHKLNGFTIMEHSDPAKRELLQKYVTWDEKSLFVNGERIMIFSGEVHPFRLPVPSLWLDVFQKIKALGFNCVSFYVDWALLEGKPGKYRAEGNFALEPFFDAAKQAGIYLLARPGPYINAEASGGGFPGWLQRVNGTLRTSDPAYLKATDNYIAHVAATVAKGQITNGGPVILYQPENEYSGACCNATFPDGDYMQYVIDQARNAGIVVPLINNDAWTGGHNAPGTGKGEVDIYGHDSYPLGFDCGHPSVWPKGNLPTTFRTDHLRESPTTPYSLIEFQAGSFDPWGGPGFAACAALVNHEFERVFYKNDLSFGAAILNLYMTFGGTNWGNLGHPGGYTSYDYGSPLTESRNVTREKYSELKLIGNFVKASPSYLLATPGNLTTSGYADTADLTVTPLLGNGTGSYFVVRHTDYTSQASTPYKLSLPTSAGRLTVPQLGGTLTLNGRDSKVHVVDYNVAGTNILYSTAEVFTWKKFGDSKVLVLYGGPGEHHELAVSLKSDVQVVEGSNSEFTSKKVEDVVVVAWDVSASRRIVQIGDLKIFLLDRNSAYNYWVPQLDKDDSSTGYSSEKTTASSIIVKAGYLVRTAYTKGSGLYLTADFNATTPVEVIGAPSNVRNLYINGEKTQFKTDKNGIWSTGVKYSAPKIKLPSMKDLDWKYLDTLPEVQSTYDDSAWPAADLDTTPNTLRPLTMPKSLHSSDYGFHTGYLIYRGHFVADGSETTFDVRTQGGSAFGSSVWLNEAFLGSWTGLNANADYNSTYRLPQVEKGKNYVLTVVIDTMGLNENWVVGTDEMKNPRGILSYKLSGRDASAITWKLTGNLGGEDYQDKIRGPLNEGGLYAERQGFHQPEPPSKKWKSASPLDGLSKPGIGFYTAQFDLDIPSGWDVPLYFNFGNSTKSAYRVQLYVNGYQYGKFVSNIGPQTSFPVPQGILNYQGTNWVALTLWALESDGAKLDDFELVNTTPVMTALSKIRPSKQPNYRQRKGAY</sequence>
<evidence type="ECO:0000250" key="1"/>
<evidence type="ECO:0000255" key="2"/>
<evidence type="ECO:0000305" key="3"/>
<comment type="function">
    <text evidence="1">Cleaves beta-linked terminal galactosyl residues from gangliosides, glycoproteins, and glycosaminoglycans.</text>
</comment>
<comment type="catalytic activity">
    <reaction>
        <text>Hydrolysis of terminal non-reducing beta-D-galactose residues in beta-D-galactosides.</text>
        <dbReference type="EC" id="3.2.1.23"/>
    </reaction>
</comment>
<comment type="subcellular location">
    <subcellularLocation>
        <location evidence="1">Secreted</location>
    </subcellularLocation>
</comment>
<comment type="similarity">
    <text evidence="3">Belongs to the glycosyl hydrolase 35 family.</text>
</comment>
<name>BGALA_NEOFI</name>
<protein>
    <recommendedName>
        <fullName>Probable beta-galactosidase A</fullName>
        <ecNumber>3.2.1.23</ecNumber>
    </recommendedName>
    <alternativeName>
        <fullName>Lactase A</fullName>
    </alternativeName>
</protein>
<dbReference type="EC" id="3.2.1.23"/>
<dbReference type="EMBL" id="DS027688">
    <property type="protein sequence ID" value="EAW22442.1"/>
    <property type="molecule type" value="Genomic_DNA"/>
</dbReference>
<dbReference type="RefSeq" id="XP_001264339.1">
    <property type="nucleotide sequence ID" value="XM_001264338.1"/>
</dbReference>
<dbReference type="SMR" id="A1D1Z9"/>
<dbReference type="STRING" id="331117.A1D1Z9"/>
<dbReference type="GlyCosmos" id="A1D1Z9">
    <property type="glycosylation" value="8 sites, No reported glycans"/>
</dbReference>
<dbReference type="EnsemblFungi" id="EAW22442">
    <property type="protein sequence ID" value="EAW22442"/>
    <property type="gene ID" value="NFIA_011250"/>
</dbReference>
<dbReference type="GeneID" id="4591834"/>
<dbReference type="KEGG" id="nfi:NFIA_011250"/>
<dbReference type="VEuPathDB" id="FungiDB:NFIA_011250"/>
<dbReference type="eggNOG" id="KOG0496">
    <property type="taxonomic scope" value="Eukaryota"/>
</dbReference>
<dbReference type="HOGENOM" id="CLU_005732_2_0_1"/>
<dbReference type="OMA" id="NEYSGAC"/>
<dbReference type="OrthoDB" id="1657402at2759"/>
<dbReference type="Proteomes" id="UP000006702">
    <property type="component" value="Unassembled WGS sequence"/>
</dbReference>
<dbReference type="GO" id="GO:0005576">
    <property type="term" value="C:extracellular region"/>
    <property type="evidence" value="ECO:0007669"/>
    <property type="project" value="UniProtKB-SubCell"/>
</dbReference>
<dbReference type="GO" id="GO:0004565">
    <property type="term" value="F:beta-galactosidase activity"/>
    <property type="evidence" value="ECO:0007669"/>
    <property type="project" value="UniProtKB-EC"/>
</dbReference>
<dbReference type="GO" id="GO:0000272">
    <property type="term" value="P:polysaccharide catabolic process"/>
    <property type="evidence" value="ECO:0007669"/>
    <property type="project" value="UniProtKB-KW"/>
</dbReference>
<dbReference type="FunFam" id="2.102.20.10:FF:000001">
    <property type="entry name" value="Beta-galactosidase A"/>
    <property type="match status" value="1"/>
</dbReference>
<dbReference type="FunFam" id="2.60.120.260:FF:000065">
    <property type="entry name" value="Beta-galactosidase A"/>
    <property type="match status" value="1"/>
</dbReference>
<dbReference type="FunFam" id="2.60.120.260:FF:000088">
    <property type="entry name" value="Beta-galactosidase A"/>
    <property type="match status" value="1"/>
</dbReference>
<dbReference type="FunFam" id="2.60.390.10:FF:000001">
    <property type="entry name" value="Beta-galactosidase A"/>
    <property type="match status" value="1"/>
</dbReference>
<dbReference type="FunFam" id="3.20.20.80:FF:000040">
    <property type="entry name" value="Beta-galactosidase A"/>
    <property type="match status" value="1"/>
</dbReference>
<dbReference type="Gene3D" id="2.102.20.10">
    <property type="entry name" value="Beta-galactosidase, domain 2"/>
    <property type="match status" value="1"/>
</dbReference>
<dbReference type="Gene3D" id="2.60.390.10">
    <property type="entry name" value="Beta-galactosidase, domain 3"/>
    <property type="match status" value="1"/>
</dbReference>
<dbReference type="Gene3D" id="2.60.120.260">
    <property type="entry name" value="Galactose-binding domain-like"/>
    <property type="match status" value="2"/>
</dbReference>
<dbReference type="Gene3D" id="3.20.20.80">
    <property type="entry name" value="Glycosidases"/>
    <property type="match status" value="1"/>
</dbReference>
<dbReference type="InterPro" id="IPR018954">
    <property type="entry name" value="Betagal_dom2"/>
</dbReference>
<dbReference type="InterPro" id="IPR037110">
    <property type="entry name" value="Betagal_dom2_sf"/>
</dbReference>
<dbReference type="InterPro" id="IPR025972">
    <property type="entry name" value="BetaGal_dom3"/>
</dbReference>
<dbReference type="InterPro" id="IPR036833">
    <property type="entry name" value="BetaGal_dom3_sf"/>
</dbReference>
<dbReference type="InterPro" id="IPR025300">
    <property type="entry name" value="BetaGal_jelly_roll_dom"/>
</dbReference>
<dbReference type="InterPro" id="IPR008979">
    <property type="entry name" value="Galactose-bd-like_sf"/>
</dbReference>
<dbReference type="InterPro" id="IPR031330">
    <property type="entry name" value="Gly_Hdrlase_35_cat"/>
</dbReference>
<dbReference type="InterPro" id="IPR019801">
    <property type="entry name" value="Glyco_hydro_35_CS"/>
</dbReference>
<dbReference type="InterPro" id="IPR001944">
    <property type="entry name" value="Glycoside_Hdrlase_35"/>
</dbReference>
<dbReference type="InterPro" id="IPR017853">
    <property type="entry name" value="Glycoside_hydrolase_SF"/>
</dbReference>
<dbReference type="PANTHER" id="PTHR23421">
    <property type="entry name" value="BETA-GALACTOSIDASE RELATED"/>
    <property type="match status" value="1"/>
</dbReference>
<dbReference type="Pfam" id="PF13364">
    <property type="entry name" value="BetaGal_ABD2"/>
    <property type="match status" value="2"/>
</dbReference>
<dbReference type="Pfam" id="PF10435">
    <property type="entry name" value="BetaGal_dom2"/>
    <property type="match status" value="1"/>
</dbReference>
<dbReference type="Pfam" id="PF13363">
    <property type="entry name" value="BetaGal_dom3"/>
    <property type="match status" value="1"/>
</dbReference>
<dbReference type="Pfam" id="PF01301">
    <property type="entry name" value="Glyco_hydro_35"/>
    <property type="match status" value="1"/>
</dbReference>
<dbReference type="PRINTS" id="PR00742">
    <property type="entry name" value="GLHYDRLASE35"/>
</dbReference>
<dbReference type="SMART" id="SM01029">
    <property type="entry name" value="BetaGal_dom2"/>
    <property type="match status" value="1"/>
</dbReference>
<dbReference type="SUPFAM" id="SSF51445">
    <property type="entry name" value="(Trans)glycosidases"/>
    <property type="match status" value="1"/>
</dbReference>
<dbReference type="SUPFAM" id="SSF117100">
    <property type="entry name" value="Beta-galactosidase LacA, domain 3"/>
    <property type="match status" value="1"/>
</dbReference>
<dbReference type="SUPFAM" id="SSF49785">
    <property type="entry name" value="Galactose-binding domain-like"/>
    <property type="match status" value="2"/>
</dbReference>
<dbReference type="SUPFAM" id="SSF51011">
    <property type="entry name" value="Glycosyl hydrolase domain"/>
    <property type="match status" value="1"/>
</dbReference>
<dbReference type="PROSITE" id="PS01182">
    <property type="entry name" value="GLYCOSYL_HYDROL_F35"/>
    <property type="match status" value="1"/>
</dbReference>
<feature type="signal peptide" evidence="2">
    <location>
        <begin position="1"/>
        <end position="18"/>
    </location>
</feature>
<feature type="chain" id="PRO_0000395221" description="Probable beta-galactosidase A">
    <location>
        <begin position="19"/>
        <end position="1006"/>
    </location>
</feature>
<feature type="active site" description="Proton donor" evidence="2">
    <location>
        <position position="200"/>
    </location>
</feature>
<feature type="active site" description="Nucleophile" evidence="2">
    <location>
        <position position="298"/>
    </location>
</feature>
<feature type="binding site" evidence="1">
    <location>
        <position position="96"/>
    </location>
    <ligand>
        <name>substrate</name>
    </ligand>
</feature>
<feature type="binding site" evidence="1">
    <location>
        <position position="140"/>
    </location>
    <ligand>
        <name>substrate</name>
    </ligand>
</feature>
<feature type="binding site" evidence="1">
    <location>
        <position position="141"/>
    </location>
    <ligand>
        <name>substrate</name>
    </ligand>
</feature>
<feature type="binding site" evidence="1">
    <location>
        <position position="142"/>
    </location>
    <ligand>
        <name>substrate</name>
    </ligand>
</feature>
<feature type="binding site" evidence="1">
    <location>
        <position position="199"/>
    </location>
    <ligand>
        <name>substrate</name>
    </ligand>
</feature>
<feature type="binding site" evidence="1">
    <location>
        <position position="260"/>
    </location>
    <ligand>
        <name>substrate</name>
    </ligand>
</feature>
<feature type="binding site" evidence="1">
    <location>
        <position position="364"/>
    </location>
    <ligand>
        <name>substrate</name>
    </ligand>
</feature>
<feature type="glycosylation site" description="N-linked (GlcNAc...) asparagine" evidence="2">
    <location>
        <position position="156"/>
    </location>
</feature>
<feature type="glycosylation site" description="N-linked (GlcNAc...) asparagine" evidence="2">
    <location>
        <position position="207"/>
    </location>
</feature>
<feature type="glycosylation site" description="N-linked (GlcNAc...) asparagine" evidence="2">
    <location>
        <position position="373"/>
    </location>
</feature>
<feature type="glycosylation site" description="N-linked (GlcNAc...) asparagine" evidence="2">
    <location>
        <position position="402"/>
    </location>
</feature>
<feature type="glycosylation site" description="N-linked (GlcNAc...) asparagine" evidence="2">
    <location>
        <position position="422"/>
    </location>
</feature>
<feature type="glycosylation site" description="N-linked (GlcNAc...) asparagine" evidence="2">
    <location>
        <position position="622"/>
    </location>
</feature>
<feature type="glycosylation site" description="N-linked (GlcNAc...) asparagine" evidence="2">
    <location>
        <position position="777"/>
    </location>
</feature>
<feature type="glycosylation site" description="N-linked (GlcNAc...) asparagine" evidence="2">
    <location>
        <position position="914"/>
    </location>
</feature>
<feature type="disulfide bond" evidence="1">
    <location>
        <begin position="205"/>
        <end position="206"/>
    </location>
</feature>
<feature type="disulfide bond" evidence="1">
    <location>
        <begin position="266"/>
        <end position="315"/>
    </location>
</feature>
<organism>
    <name type="scientific">Neosartorya fischeri (strain ATCC 1020 / DSM 3700 / CBS 544.65 / FGSC A1164 / JCM 1740 / NRRL 181 / WB 181)</name>
    <name type="common">Aspergillus fischerianus</name>
    <dbReference type="NCBI Taxonomy" id="331117"/>
    <lineage>
        <taxon>Eukaryota</taxon>
        <taxon>Fungi</taxon>
        <taxon>Dikarya</taxon>
        <taxon>Ascomycota</taxon>
        <taxon>Pezizomycotina</taxon>
        <taxon>Eurotiomycetes</taxon>
        <taxon>Eurotiomycetidae</taxon>
        <taxon>Eurotiales</taxon>
        <taxon>Aspergillaceae</taxon>
        <taxon>Aspergillus</taxon>
        <taxon>Aspergillus subgen. Fumigati</taxon>
    </lineage>
</organism>